<keyword id="KW-0025">Alternative splicing</keyword>
<keyword id="KW-0238">DNA-binding</keyword>
<keyword id="KW-0371">Homeobox</keyword>
<keyword id="KW-0539">Nucleus</keyword>
<keyword id="KW-1185">Reference proteome</keyword>
<evidence type="ECO:0000255" key="1">
    <source>
        <dbReference type="PROSITE-ProRule" id="PRU00108"/>
    </source>
</evidence>
<evidence type="ECO:0000255" key="2">
    <source>
        <dbReference type="PROSITE-ProRule" id="PRU00559"/>
    </source>
</evidence>
<evidence type="ECO:0000256" key="3">
    <source>
        <dbReference type="SAM" id="MobiDB-lite"/>
    </source>
</evidence>
<evidence type="ECO:0000269" key="4">
    <source>
    </source>
</evidence>
<evidence type="ECO:0000303" key="5">
    <source>
    </source>
</evidence>
<evidence type="ECO:0000305" key="6"/>
<dbReference type="EMBL" id="AB061817">
    <property type="protein sequence ID" value="BAB55658.1"/>
    <property type="molecule type" value="mRNA"/>
</dbReference>
<dbReference type="EMBL" id="AB007627">
    <property type="protein sequence ID" value="BAA77821.2"/>
    <property type="molecule type" value="mRNA"/>
</dbReference>
<dbReference type="EMBL" id="AP008208">
    <property type="protein sequence ID" value="BAF08015.1"/>
    <property type="status" value="ALT_INIT"/>
    <property type="molecule type" value="Genomic_DNA"/>
</dbReference>
<dbReference type="EMBL" id="AP014958">
    <property type="protein sequence ID" value="BAS77320.1"/>
    <property type="molecule type" value="Genomic_DNA"/>
</dbReference>
<dbReference type="EMBL" id="AK243352">
    <property type="protein sequence ID" value="BAH01555.1"/>
    <property type="molecule type" value="mRNA"/>
</dbReference>
<dbReference type="RefSeq" id="XP_015626237.1">
    <property type="nucleotide sequence ID" value="XM_015770751.1"/>
</dbReference>
<dbReference type="RefSeq" id="XP_015626238.1">
    <property type="nucleotide sequence ID" value="XM_015770752.1"/>
</dbReference>
<dbReference type="SMR" id="Q0E3C3"/>
<dbReference type="FunCoup" id="Q0E3C3">
    <property type="interactions" value="234"/>
</dbReference>
<dbReference type="STRING" id="39947.Q0E3C3"/>
<dbReference type="PaxDb" id="39947-Q0E3C3"/>
<dbReference type="EnsemblPlants" id="Os02t0182800-01">
    <molecule id="Q0E3C3-1"/>
    <property type="protein sequence ID" value="Os02t0182800-01"/>
    <property type="gene ID" value="Os02g0182800"/>
</dbReference>
<dbReference type="Gramene" id="Os02t0182800-01">
    <molecule id="Q0E3C3-1"/>
    <property type="protein sequence ID" value="Os02t0182800-01"/>
    <property type="gene ID" value="Os02g0182800"/>
</dbReference>
<dbReference type="KEGG" id="dosa:Os02g0182800"/>
<dbReference type="eggNOG" id="KOG0773">
    <property type="taxonomic scope" value="Eukaryota"/>
</dbReference>
<dbReference type="HOGENOM" id="CLU_040111_1_0_1"/>
<dbReference type="InParanoid" id="Q0E3C3"/>
<dbReference type="OMA" id="FITIEKT"/>
<dbReference type="OrthoDB" id="10056939at2759"/>
<dbReference type="Proteomes" id="UP000000763">
    <property type="component" value="Chromosome 2"/>
</dbReference>
<dbReference type="Proteomes" id="UP000059680">
    <property type="component" value="Chromosome 2"/>
</dbReference>
<dbReference type="GO" id="GO:0005634">
    <property type="term" value="C:nucleus"/>
    <property type="evidence" value="ECO:0000318"/>
    <property type="project" value="GO_Central"/>
</dbReference>
<dbReference type="GO" id="GO:0003677">
    <property type="term" value="F:DNA binding"/>
    <property type="evidence" value="ECO:0007669"/>
    <property type="project" value="UniProtKB-KW"/>
</dbReference>
<dbReference type="GO" id="GO:0006355">
    <property type="term" value="P:regulation of DNA-templated transcription"/>
    <property type="evidence" value="ECO:0007669"/>
    <property type="project" value="InterPro"/>
</dbReference>
<dbReference type="CDD" id="cd00086">
    <property type="entry name" value="homeodomain"/>
    <property type="match status" value="1"/>
</dbReference>
<dbReference type="FunFam" id="1.10.10.60:FF:000143">
    <property type="entry name" value="homeobox protein knotted-1-like 3 isoform X1"/>
    <property type="match status" value="1"/>
</dbReference>
<dbReference type="Gene3D" id="1.10.10.60">
    <property type="entry name" value="Homeodomain-like"/>
    <property type="match status" value="1"/>
</dbReference>
<dbReference type="InterPro" id="IPR005539">
    <property type="entry name" value="ELK_dom"/>
</dbReference>
<dbReference type="InterPro" id="IPR001356">
    <property type="entry name" value="HD"/>
</dbReference>
<dbReference type="InterPro" id="IPR009057">
    <property type="entry name" value="Homeodomain-like_sf"/>
</dbReference>
<dbReference type="InterPro" id="IPR008422">
    <property type="entry name" value="KN_HD"/>
</dbReference>
<dbReference type="InterPro" id="IPR005540">
    <property type="entry name" value="KNOX1"/>
</dbReference>
<dbReference type="InterPro" id="IPR005541">
    <property type="entry name" value="KNOX2"/>
</dbReference>
<dbReference type="InterPro" id="IPR050224">
    <property type="entry name" value="TALE_homeobox"/>
</dbReference>
<dbReference type="PANTHER" id="PTHR11850">
    <property type="entry name" value="HOMEOBOX PROTEIN TRANSCRIPTION FACTORS"/>
    <property type="match status" value="1"/>
</dbReference>
<dbReference type="Pfam" id="PF03789">
    <property type="entry name" value="ELK"/>
    <property type="match status" value="1"/>
</dbReference>
<dbReference type="Pfam" id="PF05920">
    <property type="entry name" value="Homeobox_KN"/>
    <property type="match status" value="1"/>
</dbReference>
<dbReference type="Pfam" id="PF03790">
    <property type="entry name" value="KNOX1"/>
    <property type="match status" value="1"/>
</dbReference>
<dbReference type="Pfam" id="PF03791">
    <property type="entry name" value="KNOX2"/>
    <property type="match status" value="1"/>
</dbReference>
<dbReference type="SMART" id="SM01188">
    <property type="entry name" value="ELK"/>
    <property type="match status" value="1"/>
</dbReference>
<dbReference type="SMART" id="SM00389">
    <property type="entry name" value="HOX"/>
    <property type="match status" value="1"/>
</dbReference>
<dbReference type="SMART" id="SM01255">
    <property type="entry name" value="KNOX1"/>
    <property type="match status" value="1"/>
</dbReference>
<dbReference type="SMART" id="SM01256">
    <property type="entry name" value="KNOX2"/>
    <property type="match status" value="1"/>
</dbReference>
<dbReference type="SUPFAM" id="SSF46689">
    <property type="entry name" value="Homeodomain-like"/>
    <property type="match status" value="1"/>
</dbReference>
<dbReference type="PROSITE" id="PS51213">
    <property type="entry name" value="ELK"/>
    <property type="match status" value="1"/>
</dbReference>
<dbReference type="PROSITE" id="PS00027">
    <property type="entry name" value="HOMEOBOX_1"/>
    <property type="match status" value="1"/>
</dbReference>
<dbReference type="PROSITE" id="PS50071">
    <property type="entry name" value="HOMEOBOX_2"/>
    <property type="match status" value="1"/>
</dbReference>
<feature type="chain" id="PRO_0000360005" description="Homeobox protein knotted-1-like 2">
    <location>
        <begin position="1"/>
        <end position="313"/>
    </location>
</feature>
<feature type="domain" description="ELK" evidence="2">
    <location>
        <begin position="205"/>
        <end position="225"/>
    </location>
</feature>
<feature type="DNA-binding region" description="Homeobox; TALE-type" evidence="1">
    <location>
        <begin position="226"/>
        <end position="289"/>
    </location>
</feature>
<feature type="region of interest" description="Disordered" evidence="3">
    <location>
        <begin position="13"/>
        <end position="40"/>
    </location>
</feature>
<feature type="region of interest" description="Disordered" evidence="3">
    <location>
        <begin position="282"/>
        <end position="313"/>
    </location>
</feature>
<feature type="compositionally biased region" description="Low complexity" evidence="3">
    <location>
        <begin position="14"/>
        <end position="27"/>
    </location>
</feature>
<feature type="compositionally biased region" description="Gly residues" evidence="3">
    <location>
        <begin position="28"/>
        <end position="38"/>
    </location>
</feature>
<feature type="splice variant" id="VSP_036176" description="In isoform 2." evidence="5">
    <location>
        <begin position="1"/>
        <end position="130"/>
    </location>
</feature>
<feature type="splice variant" id="VSP_036177" description="In isoform 3." evidence="6">
    <location>
        <begin position="302"/>
        <end position="313"/>
    </location>
</feature>
<gene>
    <name type="primary">HOS58</name>
    <name type="ordered locus">Os02g0182800</name>
    <name type="ordered locus">LOC_Os02g08544</name>
</gene>
<accession>Q0E3C3</accession>
<accession>B7FAA7</accession>
<accession>Q94LW5</accession>
<accession>Q9SXM9</accession>
<comment type="subcellular location">
    <subcellularLocation>
        <location evidence="1 2">Nucleus</location>
    </subcellularLocation>
</comment>
<comment type="alternative products">
    <event type="alternative splicing"/>
    <isoform>
        <id>Q0E3C3-1</id>
        <name>1</name>
        <sequence type="displayed"/>
    </isoform>
    <isoform>
        <id>Q0E3C3-2</id>
        <name>2</name>
        <sequence type="described" ref="VSP_036176"/>
    </isoform>
    <isoform>
        <id>Q0E3C3-3</id>
        <name>3</name>
        <sequence type="described" ref="VSP_036177"/>
    </isoform>
</comment>
<comment type="tissue specificity">
    <text evidence="4">Isoform 1 is expressed in roots, leaf blades, leaf sheaths and flowers. Isoform 2 is expressed in leaf blades, leaf sheaths and flowers.</text>
</comment>
<comment type="similarity">
    <text evidence="2">Belongs to the TALE/KNOX homeobox family.</text>
</comment>
<comment type="sequence caution" evidence="6">
    <conflict type="erroneous initiation">
        <sequence resource="EMBL-CDS" id="BAF08015"/>
    </conflict>
</comment>
<protein>
    <recommendedName>
        <fullName>Homeobox protein knotted-1-like 2</fullName>
    </recommendedName>
    <alternativeName>
        <fullName>Homeobox protein HOS58</fullName>
    </alternativeName>
</protein>
<reference key="1">
    <citation type="journal article" date="2002" name="Gene">
        <title>Organ-specific alternative transcripts of KNOX family class 2 homeobox genes of rice.</title>
        <authorList>
            <person name="Ito Y."/>
            <person name="Hirochika H."/>
            <person name="Kurata N."/>
        </authorList>
    </citation>
    <scope>NUCLEOTIDE SEQUENCE [MRNA] (ISOFORM 2)</scope>
    <scope>NUCLEOTIDE SEQUENCE [MRNA] OF 102-313 (ISOFORM 1)</scope>
    <scope>TISSUE SPECIFICITY</scope>
    <source>
        <strain>cv. Nipponbare</strain>
    </source>
</reference>
<reference key="2">
    <citation type="journal article" date="2005" name="Nature">
        <title>The map-based sequence of the rice genome.</title>
        <authorList>
            <consortium name="International rice genome sequencing project (IRGSP)"/>
        </authorList>
    </citation>
    <scope>NUCLEOTIDE SEQUENCE [LARGE SCALE GENOMIC DNA]</scope>
    <source>
        <strain>cv. Nipponbare</strain>
    </source>
</reference>
<reference key="3">
    <citation type="journal article" date="2008" name="Nucleic Acids Res.">
        <title>The rice annotation project database (RAP-DB): 2008 update.</title>
        <authorList>
            <consortium name="The rice annotation project (RAP)"/>
        </authorList>
    </citation>
    <scope>GENOME REANNOTATION</scope>
    <source>
        <strain>cv. Nipponbare</strain>
    </source>
</reference>
<reference key="4">
    <citation type="journal article" date="2013" name="Rice">
        <title>Improvement of the Oryza sativa Nipponbare reference genome using next generation sequence and optical map data.</title>
        <authorList>
            <person name="Kawahara Y."/>
            <person name="de la Bastide M."/>
            <person name="Hamilton J.P."/>
            <person name="Kanamori H."/>
            <person name="McCombie W.R."/>
            <person name="Ouyang S."/>
            <person name="Schwartz D.C."/>
            <person name="Tanaka T."/>
            <person name="Wu J."/>
            <person name="Zhou S."/>
            <person name="Childs K.L."/>
            <person name="Davidson R.M."/>
            <person name="Lin H."/>
            <person name="Quesada-Ocampo L."/>
            <person name="Vaillancourt B."/>
            <person name="Sakai H."/>
            <person name="Lee S.S."/>
            <person name="Kim J."/>
            <person name="Numa H."/>
            <person name="Itoh T."/>
            <person name="Buell C.R."/>
            <person name="Matsumoto T."/>
        </authorList>
    </citation>
    <scope>GENOME REANNOTATION</scope>
    <source>
        <strain>cv. Nipponbare</strain>
    </source>
</reference>
<reference key="5">
    <citation type="submission" date="2006-10" db="EMBL/GenBank/DDBJ databases">
        <title>Oryza sativa full length cDNA.</title>
        <authorList>
            <consortium name="The rice full-length cDNA consortium"/>
        </authorList>
    </citation>
    <scope>NUCLEOTIDE SEQUENCE [LARGE SCALE MRNA] (ISOFORM 1)</scope>
    <source>
        <strain>cv. Nipponbare</strain>
    </source>
</reference>
<reference key="6">
    <citation type="journal article" date="2008" name="FEBS J.">
        <title>Genome-wide identification, classification, evolutionary expansion and expression analyses of homeobox genes in rice.</title>
        <authorList>
            <person name="Jain M."/>
            <person name="Tyagi A.K."/>
            <person name="Khurana J.P."/>
        </authorList>
    </citation>
    <scope>GENE FAMILY</scope>
    <scope>NOMENCLATURE</scope>
</reference>
<sequence length="313" mass="33876">MAFHYPDHGLAMDPSSAAASSPNPSFSPGGGGGGGVGGGEREKAAVAAHPLYERLLEAHVACLRVATPVDQLPRIDAQIAARPPPLAAASAAAAAGGPSGGEELDLFMTHYVLLLCSFKEQLQQHVRVHAMEAVMGCWELEQSLQSLTGASPGEGTGATMSDDEDNQVDSEANMFDGNDGSDGMGFGPLMLTEGERSLVERVRHELKNELKQGYKEKLVDIREEILRKRRAGKLPGDTASILKAWWQAHSKWPYPTEDDKARLVQETGLQLKQINNWFINQRKRNWHSNPASSGEKTKKKRNVTGDGGAEQSW</sequence>
<name>KNOS2_ORYSJ</name>
<organism>
    <name type="scientific">Oryza sativa subsp. japonica</name>
    <name type="common">Rice</name>
    <dbReference type="NCBI Taxonomy" id="39947"/>
    <lineage>
        <taxon>Eukaryota</taxon>
        <taxon>Viridiplantae</taxon>
        <taxon>Streptophyta</taxon>
        <taxon>Embryophyta</taxon>
        <taxon>Tracheophyta</taxon>
        <taxon>Spermatophyta</taxon>
        <taxon>Magnoliopsida</taxon>
        <taxon>Liliopsida</taxon>
        <taxon>Poales</taxon>
        <taxon>Poaceae</taxon>
        <taxon>BOP clade</taxon>
        <taxon>Oryzoideae</taxon>
        <taxon>Oryzeae</taxon>
        <taxon>Oryzinae</taxon>
        <taxon>Oryza</taxon>
        <taxon>Oryza sativa</taxon>
    </lineage>
</organism>
<proteinExistence type="evidence at transcript level"/>